<dbReference type="EC" id="2.7.1.130" evidence="1"/>
<dbReference type="EMBL" id="AM398681">
    <property type="protein sequence ID" value="CAL43546.1"/>
    <property type="molecule type" value="Genomic_DNA"/>
</dbReference>
<dbReference type="RefSeq" id="WP_011963591.1">
    <property type="nucleotide sequence ID" value="NC_009613.3"/>
</dbReference>
<dbReference type="RefSeq" id="YP_001296355.1">
    <property type="nucleotide sequence ID" value="NC_009613.3"/>
</dbReference>
<dbReference type="SMR" id="A6GZM3"/>
<dbReference type="STRING" id="402612.FP1473"/>
<dbReference type="EnsemblBacteria" id="CAL43546">
    <property type="protein sequence ID" value="CAL43546"/>
    <property type="gene ID" value="FP1473"/>
</dbReference>
<dbReference type="GeneID" id="66552931"/>
<dbReference type="KEGG" id="fps:FP1473"/>
<dbReference type="PATRIC" id="fig|402612.5.peg.1485"/>
<dbReference type="eggNOG" id="COG1663">
    <property type="taxonomic scope" value="Bacteria"/>
</dbReference>
<dbReference type="HOGENOM" id="CLU_038816_6_0_10"/>
<dbReference type="OrthoDB" id="9766423at2"/>
<dbReference type="UniPathway" id="UPA00359">
    <property type="reaction ID" value="UER00482"/>
</dbReference>
<dbReference type="Proteomes" id="UP000006394">
    <property type="component" value="Chromosome"/>
</dbReference>
<dbReference type="GO" id="GO:0005886">
    <property type="term" value="C:plasma membrane"/>
    <property type="evidence" value="ECO:0007669"/>
    <property type="project" value="TreeGrafter"/>
</dbReference>
<dbReference type="GO" id="GO:0005524">
    <property type="term" value="F:ATP binding"/>
    <property type="evidence" value="ECO:0007669"/>
    <property type="project" value="UniProtKB-UniRule"/>
</dbReference>
<dbReference type="GO" id="GO:0009029">
    <property type="term" value="F:tetraacyldisaccharide 4'-kinase activity"/>
    <property type="evidence" value="ECO:0007669"/>
    <property type="project" value="UniProtKB-UniRule"/>
</dbReference>
<dbReference type="GO" id="GO:0009245">
    <property type="term" value="P:lipid A biosynthetic process"/>
    <property type="evidence" value="ECO:0007669"/>
    <property type="project" value="UniProtKB-UniRule"/>
</dbReference>
<dbReference type="HAMAP" id="MF_00409">
    <property type="entry name" value="LpxK"/>
    <property type="match status" value="1"/>
</dbReference>
<dbReference type="InterPro" id="IPR003758">
    <property type="entry name" value="LpxK"/>
</dbReference>
<dbReference type="InterPro" id="IPR027417">
    <property type="entry name" value="P-loop_NTPase"/>
</dbReference>
<dbReference type="NCBIfam" id="TIGR00682">
    <property type="entry name" value="lpxK"/>
    <property type="match status" value="1"/>
</dbReference>
<dbReference type="PANTHER" id="PTHR42724">
    <property type="entry name" value="TETRAACYLDISACCHARIDE 4'-KINASE"/>
    <property type="match status" value="1"/>
</dbReference>
<dbReference type="PANTHER" id="PTHR42724:SF1">
    <property type="entry name" value="TETRAACYLDISACCHARIDE 4'-KINASE, MITOCHONDRIAL-RELATED"/>
    <property type="match status" value="1"/>
</dbReference>
<dbReference type="Pfam" id="PF02606">
    <property type="entry name" value="LpxK"/>
    <property type="match status" value="1"/>
</dbReference>
<dbReference type="SUPFAM" id="SSF52540">
    <property type="entry name" value="P-loop containing nucleoside triphosphate hydrolases"/>
    <property type="match status" value="1"/>
</dbReference>
<reference key="1">
    <citation type="journal article" date="2007" name="Nat. Biotechnol.">
        <title>Complete genome sequence of the fish pathogen Flavobacterium psychrophilum.</title>
        <authorList>
            <person name="Duchaud E."/>
            <person name="Boussaha M."/>
            <person name="Loux V."/>
            <person name="Bernardet J.-F."/>
            <person name="Michel C."/>
            <person name="Kerouault B."/>
            <person name="Mondot S."/>
            <person name="Nicolas P."/>
            <person name="Bossy R."/>
            <person name="Caron C."/>
            <person name="Bessieres P."/>
            <person name="Gibrat J.-F."/>
            <person name="Claverol S."/>
            <person name="Dumetz F."/>
            <person name="Le Henaff M."/>
            <person name="Benmansour A."/>
        </authorList>
    </citation>
    <scope>NUCLEOTIDE SEQUENCE [LARGE SCALE GENOMIC DNA]</scope>
    <source>
        <strain>ATCC 49511 / DSM 21280 / CIP 103535 / JIP02/86</strain>
    </source>
</reference>
<accession>A6GZM3</accession>
<feature type="chain" id="PRO_0000340835" description="Tetraacyldisaccharide 4'-kinase">
    <location>
        <begin position="1"/>
        <end position="343"/>
    </location>
</feature>
<feature type="binding site" evidence="1">
    <location>
        <begin position="47"/>
        <end position="54"/>
    </location>
    <ligand>
        <name>ATP</name>
        <dbReference type="ChEBI" id="CHEBI:30616"/>
    </ligand>
</feature>
<organism>
    <name type="scientific">Flavobacterium psychrophilum (strain ATCC 49511 / DSM 21280 / CIP 103535 / JIP02/86)</name>
    <dbReference type="NCBI Taxonomy" id="402612"/>
    <lineage>
        <taxon>Bacteria</taxon>
        <taxon>Pseudomonadati</taxon>
        <taxon>Bacteroidota</taxon>
        <taxon>Flavobacteriia</taxon>
        <taxon>Flavobacteriales</taxon>
        <taxon>Flavobacteriaceae</taxon>
        <taxon>Flavobacterium</taxon>
    </lineage>
</organism>
<protein>
    <recommendedName>
        <fullName evidence="1">Tetraacyldisaccharide 4'-kinase</fullName>
        <ecNumber evidence="1">2.7.1.130</ecNumber>
    </recommendedName>
    <alternativeName>
        <fullName evidence="1">Lipid A 4'-kinase</fullName>
    </alternativeName>
</protein>
<sequence length="343" mass="39052">MNFLRKTLFPFAILYGFITSIRNFLFDCGILKSHAFPIPVIAVGNLSVGGTGKTPQIEYLIRLLSNKYQIATLSRGYKRKSEGFILANPTSNAEILGDEPFQFYKKFPNIQVAVAANRKNGIERLLSLPNKPEIILLDDAFQHRKVKAGFYILLTAYNDLFINDFMLPTGNLRESRSGAKRANMIIVTKCPKDISELAQNKIKEALINYNNKKAEVFFTFIDYDDKIYSANKALNVNEVKTASKLLLAGIAKPESFFAHLQSQNDECLVYPDHHHFLEKNITDIKEKAKNKIIITTEKDFVRLSEKLNSDNLFYLPIKSLFVNNEKKFDKKIINYVESSTTNG</sequence>
<comment type="function">
    <text evidence="1">Transfers the gamma-phosphate of ATP to the 4'-position of a tetraacyldisaccharide 1-phosphate intermediate (termed DS-1-P) to form tetraacyldisaccharide 1,4'-bis-phosphate (lipid IVA).</text>
</comment>
<comment type="catalytic activity">
    <reaction evidence="1">
        <text>a lipid A disaccharide + ATP = a lipid IVA + ADP + H(+)</text>
        <dbReference type="Rhea" id="RHEA:67840"/>
        <dbReference type="ChEBI" id="CHEBI:15378"/>
        <dbReference type="ChEBI" id="CHEBI:30616"/>
        <dbReference type="ChEBI" id="CHEBI:176343"/>
        <dbReference type="ChEBI" id="CHEBI:176425"/>
        <dbReference type="ChEBI" id="CHEBI:456216"/>
        <dbReference type="EC" id="2.7.1.130"/>
    </reaction>
</comment>
<comment type="pathway">
    <text evidence="1">Glycolipid biosynthesis; lipid IV(A) biosynthesis; lipid IV(A) from (3R)-3-hydroxytetradecanoyl-[acyl-carrier-protein] and UDP-N-acetyl-alpha-D-glucosamine: step 6/6.</text>
</comment>
<comment type="similarity">
    <text evidence="1">Belongs to the LpxK family.</text>
</comment>
<evidence type="ECO:0000255" key="1">
    <source>
        <dbReference type="HAMAP-Rule" id="MF_00409"/>
    </source>
</evidence>
<proteinExistence type="inferred from homology"/>
<keyword id="KW-0067">ATP-binding</keyword>
<keyword id="KW-0418">Kinase</keyword>
<keyword id="KW-0441">Lipid A biosynthesis</keyword>
<keyword id="KW-0444">Lipid biosynthesis</keyword>
<keyword id="KW-0443">Lipid metabolism</keyword>
<keyword id="KW-0547">Nucleotide-binding</keyword>
<keyword id="KW-1185">Reference proteome</keyword>
<keyword id="KW-0808">Transferase</keyword>
<name>LPXK_FLAPJ</name>
<gene>
    <name evidence="1" type="primary">lpxK</name>
    <name type="ordered locus">FP1473</name>
</gene>